<dbReference type="EMBL" id="CP000057">
    <property type="protein sequence ID" value="AAX88203.1"/>
    <property type="molecule type" value="Genomic_DNA"/>
</dbReference>
<dbReference type="KEGG" id="hit:NTHI1376"/>
<dbReference type="HOGENOM" id="CLU_128746_0_0_6"/>
<dbReference type="Proteomes" id="UP000002525">
    <property type="component" value="Chromosome"/>
</dbReference>
<dbReference type="GO" id="GO:0005886">
    <property type="term" value="C:plasma membrane"/>
    <property type="evidence" value="ECO:0007669"/>
    <property type="project" value="UniProtKB-SubCell"/>
</dbReference>
<dbReference type="HAMAP" id="MF_01101">
    <property type="entry name" value="UPF0208"/>
    <property type="match status" value="1"/>
</dbReference>
<dbReference type="InterPro" id="IPR007334">
    <property type="entry name" value="UPF0208"/>
</dbReference>
<dbReference type="NCBIfam" id="NF002493">
    <property type="entry name" value="PRK01816.1"/>
    <property type="match status" value="1"/>
</dbReference>
<dbReference type="Pfam" id="PF04217">
    <property type="entry name" value="DUF412"/>
    <property type="match status" value="1"/>
</dbReference>
<reference key="1">
    <citation type="journal article" date="2005" name="J. Bacteriol.">
        <title>Genomic sequence of an otitis media isolate of nontypeable Haemophilus influenzae: comparative study with H. influenzae serotype d, strain KW20.</title>
        <authorList>
            <person name="Harrison A."/>
            <person name="Dyer D.W."/>
            <person name="Gillaspy A."/>
            <person name="Ray W.C."/>
            <person name="Mungur R."/>
            <person name="Carson M.B."/>
            <person name="Zhong H."/>
            <person name="Gipson J."/>
            <person name="Gipson M."/>
            <person name="Johnson L.S."/>
            <person name="Lewis L."/>
            <person name="Bakaletz L.O."/>
            <person name="Munson R.S. Jr."/>
        </authorList>
    </citation>
    <scope>NUCLEOTIDE SEQUENCE [LARGE SCALE GENOMIC DNA]</scope>
    <source>
        <strain>86-028NP</strain>
    </source>
</reference>
<name>Y1376_HAEI8</name>
<protein>
    <recommendedName>
        <fullName evidence="1">UPF0208 membrane protein NTHI1376</fullName>
    </recommendedName>
</protein>
<evidence type="ECO:0000255" key="1">
    <source>
        <dbReference type="HAMAP-Rule" id="MF_01101"/>
    </source>
</evidence>
<comment type="subcellular location">
    <subcellularLocation>
        <location evidence="1">Cell inner membrane</location>
        <topology evidence="1">Multi-pass membrane protein</topology>
    </subcellularLocation>
</comment>
<comment type="similarity">
    <text evidence="1">Belongs to the UPF0208 family.</text>
</comment>
<organism>
    <name type="scientific">Haemophilus influenzae (strain 86-028NP)</name>
    <dbReference type="NCBI Taxonomy" id="281310"/>
    <lineage>
        <taxon>Bacteria</taxon>
        <taxon>Pseudomonadati</taxon>
        <taxon>Pseudomonadota</taxon>
        <taxon>Gammaproteobacteria</taxon>
        <taxon>Pasteurellales</taxon>
        <taxon>Pasteurellaceae</taxon>
        <taxon>Haemophilus</taxon>
    </lineage>
</organism>
<proteinExistence type="inferred from homology"/>
<feature type="chain" id="PRO_1000064974" description="UPF0208 membrane protein NTHI1376">
    <location>
        <begin position="1"/>
        <end position="147"/>
    </location>
</feature>
<feature type="transmembrane region" description="Helical" evidence="1">
    <location>
        <begin position="38"/>
        <end position="58"/>
    </location>
</feature>
<feature type="transmembrane region" description="Helical" evidence="1">
    <location>
        <begin position="67"/>
        <end position="87"/>
    </location>
</feature>
<accession>Q4QL94</accession>
<gene>
    <name type="ordered locus">NTHI1376</name>
</gene>
<keyword id="KW-0997">Cell inner membrane</keyword>
<keyword id="KW-1003">Cell membrane</keyword>
<keyword id="KW-0472">Membrane</keyword>
<keyword id="KW-0812">Transmembrane</keyword>
<keyword id="KW-1133">Transmembrane helix</keyword>
<sequence>MAFFSIFKQGQIYLNTWPQEAKLGIIFPENRIMKATSFAQKFMPFVAVFAILWQQIYAKNDLMAFSIAILTALFALLIPFQGLYWLGKRANSPLENQSAVWFYDICERLKQQNEPLPFVQEKPTYQHLAEVLRKAQSKFERAFWQEI</sequence>